<accession>Q9I9R3</accession>
<accession>Q3B729</accession>
<accession>Q7ZZ51</accession>
<accession>Q8AW23</accession>
<accession>Q8AW28</accession>
<accession>Q8JFW0</accession>
<name>S40A1_DANRE</name>
<keyword id="KW-1003">Cell membrane</keyword>
<keyword id="KW-0406">Ion transport</keyword>
<keyword id="KW-0408">Iron</keyword>
<keyword id="KW-0410">Iron transport</keyword>
<keyword id="KW-0472">Membrane</keyword>
<keyword id="KW-0479">Metal-binding</keyword>
<keyword id="KW-1185">Reference proteome</keyword>
<keyword id="KW-0812">Transmembrane</keyword>
<keyword id="KW-1133">Transmembrane helix</keyword>
<keyword id="KW-0813">Transport</keyword>
<gene>
    <name type="primary">slc40a1</name>
    <name evidence="4" type="synonym">fpn1</name>
    <name type="synonym">slc39a1</name>
</gene>
<comment type="function">
    <text evidence="3">Transports Fe(2+) from the inside of a cell to the outside of the cell, playing a key role for maintaining systemic iron homeostasis (PubMed:10693807). May be involved in transfer of Fe(2+) between maternal and fetal circulation (PubMed:10693807).</text>
</comment>
<comment type="catalytic activity">
    <reaction evidence="3">
        <text>Fe(2+)(in) = Fe(2+)(out)</text>
        <dbReference type="Rhea" id="RHEA:28486"/>
        <dbReference type="ChEBI" id="CHEBI:29033"/>
    </reaction>
    <physiologicalReaction direction="left-to-right" evidence="6">
        <dbReference type="Rhea" id="RHEA:28487"/>
    </physiologicalReaction>
</comment>
<comment type="subcellular location">
    <subcellularLocation>
        <location evidence="2">Cell membrane</location>
        <topology evidence="2">Multi-pass membrane protein</topology>
    </subcellularLocation>
    <subcellularLocation>
        <location evidence="2">Basolateral cell membrane</location>
        <topology evidence="2">Multi-pass membrane protein</topology>
    </subcellularLocation>
</comment>
<comment type="tissue specificity">
    <text evidence="3">Expressed in the yolk sac and placenta.</text>
</comment>
<comment type="similarity">
    <text evidence="5">Belongs to the ferroportin (FP) (TC 2.A.100) family. SLC40A subfamily.</text>
</comment>
<comment type="caution">
    <text evidence="1 2">Manganese (Mn(2+)) transport by SLC40A1 remains controversial. Some in vitro studies have suggested that SLC40A1 transports minimal amounts of Mn(2+).</text>
</comment>
<comment type="sequence caution" evidence="5">
    <conflict type="miscellaneous discrepancy">
        <sequence resource="EMBL-CDS" id="AAI07846"/>
    </conflict>
    <text>Contaminating sequence. Potential poly-A sequence.</text>
</comment>
<dbReference type="EMBL" id="AF226612">
    <property type="protein sequence ID" value="AAF36695.1"/>
    <property type="molecule type" value="mRNA"/>
</dbReference>
<dbReference type="EMBL" id="AL591593">
    <property type="protein sequence ID" value="CAD43474.1"/>
    <property type="molecule type" value="Genomic_DNA"/>
</dbReference>
<dbReference type="EMBL" id="AL672145">
    <property type="protein sequence ID" value="CAD58776.1"/>
    <property type="molecule type" value="Genomic_DNA"/>
</dbReference>
<dbReference type="EMBL" id="AL672118">
    <property type="protein sequence ID" value="CAD52128.1"/>
    <property type="molecule type" value="Genomic_DNA"/>
</dbReference>
<dbReference type="EMBL" id="AL731861">
    <property type="protein sequence ID" value="CAD61076.1"/>
    <property type="molecule type" value="Genomic_DNA"/>
</dbReference>
<dbReference type="EMBL" id="BC107845">
    <property type="protein sequence ID" value="AAI07846.1"/>
    <property type="status" value="ALT_SEQ"/>
    <property type="molecule type" value="mRNA"/>
</dbReference>
<dbReference type="RefSeq" id="NP_571704.1">
    <property type="nucleotide sequence ID" value="NM_131629.1"/>
</dbReference>
<dbReference type="SMR" id="Q9I9R3"/>
<dbReference type="FunCoup" id="Q9I9R3">
    <property type="interactions" value="436"/>
</dbReference>
<dbReference type="STRING" id="7955.ENSDARP00000000250"/>
<dbReference type="TCDB" id="2.A.100.1.7">
    <property type="family name" value="the ferroportin (fpn) family"/>
</dbReference>
<dbReference type="PaxDb" id="7955-ENSDARP00000000250"/>
<dbReference type="Ensembl" id="ENSDART00000000250">
    <property type="protein sequence ID" value="ENSDARP00000000250"/>
    <property type="gene ID" value="ENSDARG00000000241"/>
</dbReference>
<dbReference type="GeneID" id="58153"/>
<dbReference type="KEGG" id="dre:58153"/>
<dbReference type="AGR" id="ZFIN:ZDB-GENE-000511-8"/>
<dbReference type="CTD" id="30061"/>
<dbReference type="ZFIN" id="ZDB-GENE-000511-8">
    <property type="gene designation" value="slc40a1"/>
</dbReference>
<dbReference type="eggNOG" id="KOG2601">
    <property type="taxonomic scope" value="Eukaryota"/>
</dbReference>
<dbReference type="InParanoid" id="Q9I9R3"/>
<dbReference type="OMA" id="VAMGHVM"/>
<dbReference type="OrthoDB" id="648861at2759"/>
<dbReference type="PhylomeDB" id="Q9I9R3"/>
<dbReference type="Reactome" id="R-DRE-425410">
    <property type="pathway name" value="Metal ion SLC transporters"/>
</dbReference>
<dbReference type="Reactome" id="R-DRE-917937">
    <property type="pathway name" value="Iron uptake and transport"/>
</dbReference>
<dbReference type="PRO" id="PR:Q9I9R3"/>
<dbReference type="Proteomes" id="UP000000437">
    <property type="component" value="Chromosome 9"/>
</dbReference>
<dbReference type="GO" id="GO:0016323">
    <property type="term" value="C:basolateral plasma membrane"/>
    <property type="evidence" value="ECO:0000318"/>
    <property type="project" value="GO_Central"/>
</dbReference>
<dbReference type="GO" id="GO:0016020">
    <property type="term" value="C:membrane"/>
    <property type="evidence" value="ECO:0000250"/>
    <property type="project" value="ZFIN"/>
</dbReference>
<dbReference type="GO" id="GO:0005381">
    <property type="term" value="F:iron ion transmembrane transporter activity"/>
    <property type="evidence" value="ECO:0000314"/>
    <property type="project" value="ZFIN"/>
</dbReference>
<dbReference type="GO" id="GO:0046872">
    <property type="term" value="F:metal ion binding"/>
    <property type="evidence" value="ECO:0007669"/>
    <property type="project" value="UniProtKB-KW"/>
</dbReference>
<dbReference type="GO" id="GO:0017046">
    <property type="term" value="F:peptide hormone binding"/>
    <property type="evidence" value="ECO:0000318"/>
    <property type="project" value="GO_Central"/>
</dbReference>
<dbReference type="GO" id="GO:0030282">
    <property type="term" value="P:bone mineralization"/>
    <property type="evidence" value="ECO:0000315"/>
    <property type="project" value="ZFIN"/>
</dbReference>
<dbReference type="GO" id="GO:0035162">
    <property type="term" value="P:embryonic hemopoiesis"/>
    <property type="evidence" value="ECO:0000315"/>
    <property type="project" value="ZFIN"/>
</dbReference>
<dbReference type="GO" id="GO:0042541">
    <property type="term" value="P:hemoglobin biosynthetic process"/>
    <property type="evidence" value="ECO:0000315"/>
    <property type="project" value="ZFIN"/>
</dbReference>
<dbReference type="GO" id="GO:0006879">
    <property type="term" value="P:intracellular iron ion homeostasis"/>
    <property type="evidence" value="ECO:0000315"/>
    <property type="project" value="ZFIN"/>
</dbReference>
<dbReference type="GO" id="GO:0034755">
    <property type="term" value="P:iron ion transmembrane transport"/>
    <property type="evidence" value="ECO:0000318"/>
    <property type="project" value="GO_Central"/>
</dbReference>
<dbReference type="GO" id="GO:0006826">
    <property type="term" value="P:iron ion transport"/>
    <property type="evidence" value="ECO:0000315"/>
    <property type="project" value="ZFIN"/>
</dbReference>
<dbReference type="GO" id="GO:0043362">
    <property type="term" value="P:nucleate erythrocyte maturation"/>
    <property type="evidence" value="ECO:0000315"/>
    <property type="project" value="ZFIN"/>
</dbReference>
<dbReference type="GO" id="GO:0046688">
    <property type="term" value="P:response to copper ion"/>
    <property type="evidence" value="ECO:0000314"/>
    <property type="project" value="ZFIN"/>
</dbReference>
<dbReference type="GO" id="GO:0010039">
    <property type="term" value="P:response to iron ion"/>
    <property type="evidence" value="ECO:0000314"/>
    <property type="project" value="ZFIN"/>
</dbReference>
<dbReference type="CDD" id="cd17480">
    <property type="entry name" value="MFS_SLC40A1_like"/>
    <property type="match status" value="1"/>
</dbReference>
<dbReference type="Gene3D" id="1.20.1250.20">
    <property type="entry name" value="MFS general substrate transporter like domains"/>
    <property type="match status" value="1"/>
</dbReference>
<dbReference type="InterPro" id="IPR009716">
    <property type="entry name" value="Ferroportin-1"/>
</dbReference>
<dbReference type="InterPro" id="IPR036259">
    <property type="entry name" value="MFS_trans_sf"/>
</dbReference>
<dbReference type="PANTHER" id="PTHR11660">
    <property type="entry name" value="SOLUTE CARRIER FAMILY 40 MEMBER"/>
    <property type="match status" value="1"/>
</dbReference>
<dbReference type="PANTHER" id="PTHR11660:SF47">
    <property type="entry name" value="SOLUTE CARRIER FAMILY 40 MEMBER 1"/>
    <property type="match status" value="1"/>
</dbReference>
<dbReference type="Pfam" id="PF06963">
    <property type="entry name" value="FPN1"/>
    <property type="match status" value="1"/>
</dbReference>
<dbReference type="SUPFAM" id="SSF103473">
    <property type="entry name" value="MFS general substrate transporter"/>
    <property type="match status" value="1"/>
</dbReference>
<reference key="1">
    <citation type="journal article" date="2000" name="Nature">
        <title>Positional cloning of zebrafish ferroportin1 identifies a conserved vertebrate iron exporter.</title>
        <authorList>
            <person name="Donovan A."/>
            <person name="Brownlie A."/>
            <person name="Zhou Y."/>
            <person name="Shepard J."/>
            <person name="Pratt S.J."/>
            <person name="Moynihan J."/>
            <person name="Paw B.H."/>
            <person name="Drejer A."/>
            <person name="Barut B."/>
            <person name="Zapata A."/>
            <person name="Law T.C."/>
            <person name="Brugnara C."/>
            <person name="Lux S.E. IV"/>
            <person name="Pinkus G.S."/>
            <person name="Pinkus J.L."/>
            <person name="Kingsley P.D."/>
            <person name="Palis J."/>
            <person name="Fleming M.D."/>
            <person name="Andrews N.C."/>
            <person name="Zon L.I."/>
        </authorList>
    </citation>
    <scope>NUCLEOTIDE SEQUENCE [MRNA]</scope>
    <scope>DEVELOPMENTAL STAGE</scope>
    <scope>FUNCTION</scope>
    <scope>TRANSPORTER ACTIVITY</scope>
    <scope>TISSUE SPECIFICITY</scope>
    <scope>MUTAGENESIS OF LEU-167</scope>
    <source>
        <tissue>Kidney</tissue>
    </source>
</reference>
<reference key="2">
    <citation type="journal article" date="2013" name="Nature">
        <title>The zebrafish reference genome sequence and its relationship to the human genome.</title>
        <authorList>
            <person name="Howe K."/>
            <person name="Clark M.D."/>
            <person name="Torroja C.F."/>
            <person name="Torrance J."/>
            <person name="Berthelot C."/>
            <person name="Muffato M."/>
            <person name="Collins J.E."/>
            <person name="Humphray S."/>
            <person name="McLaren K."/>
            <person name="Matthews L."/>
            <person name="McLaren S."/>
            <person name="Sealy I."/>
            <person name="Caccamo M."/>
            <person name="Churcher C."/>
            <person name="Scott C."/>
            <person name="Barrett J.C."/>
            <person name="Koch R."/>
            <person name="Rauch G.J."/>
            <person name="White S."/>
            <person name="Chow W."/>
            <person name="Kilian B."/>
            <person name="Quintais L.T."/>
            <person name="Guerra-Assuncao J.A."/>
            <person name="Zhou Y."/>
            <person name="Gu Y."/>
            <person name="Yen J."/>
            <person name="Vogel J.H."/>
            <person name="Eyre T."/>
            <person name="Redmond S."/>
            <person name="Banerjee R."/>
            <person name="Chi J."/>
            <person name="Fu B."/>
            <person name="Langley E."/>
            <person name="Maguire S.F."/>
            <person name="Laird G.K."/>
            <person name="Lloyd D."/>
            <person name="Kenyon E."/>
            <person name="Donaldson S."/>
            <person name="Sehra H."/>
            <person name="Almeida-King J."/>
            <person name="Loveland J."/>
            <person name="Trevanion S."/>
            <person name="Jones M."/>
            <person name="Quail M."/>
            <person name="Willey D."/>
            <person name="Hunt A."/>
            <person name="Burton J."/>
            <person name="Sims S."/>
            <person name="McLay K."/>
            <person name="Plumb B."/>
            <person name="Davis J."/>
            <person name="Clee C."/>
            <person name="Oliver K."/>
            <person name="Clark R."/>
            <person name="Riddle C."/>
            <person name="Elliot D."/>
            <person name="Threadgold G."/>
            <person name="Harden G."/>
            <person name="Ware D."/>
            <person name="Begum S."/>
            <person name="Mortimore B."/>
            <person name="Kerry G."/>
            <person name="Heath P."/>
            <person name="Phillimore B."/>
            <person name="Tracey A."/>
            <person name="Corby N."/>
            <person name="Dunn M."/>
            <person name="Johnson C."/>
            <person name="Wood J."/>
            <person name="Clark S."/>
            <person name="Pelan S."/>
            <person name="Griffiths G."/>
            <person name="Smith M."/>
            <person name="Glithero R."/>
            <person name="Howden P."/>
            <person name="Barker N."/>
            <person name="Lloyd C."/>
            <person name="Stevens C."/>
            <person name="Harley J."/>
            <person name="Holt K."/>
            <person name="Panagiotidis G."/>
            <person name="Lovell J."/>
            <person name="Beasley H."/>
            <person name="Henderson C."/>
            <person name="Gordon D."/>
            <person name="Auger K."/>
            <person name="Wright D."/>
            <person name="Collins J."/>
            <person name="Raisen C."/>
            <person name="Dyer L."/>
            <person name="Leung K."/>
            <person name="Robertson L."/>
            <person name="Ambridge K."/>
            <person name="Leongamornlert D."/>
            <person name="McGuire S."/>
            <person name="Gilderthorp R."/>
            <person name="Griffiths C."/>
            <person name="Manthravadi D."/>
            <person name="Nichol S."/>
            <person name="Barker G."/>
            <person name="Whitehead S."/>
            <person name="Kay M."/>
            <person name="Brown J."/>
            <person name="Murnane C."/>
            <person name="Gray E."/>
            <person name="Humphries M."/>
            <person name="Sycamore N."/>
            <person name="Barker D."/>
            <person name="Saunders D."/>
            <person name="Wallis J."/>
            <person name="Babbage A."/>
            <person name="Hammond S."/>
            <person name="Mashreghi-Mohammadi M."/>
            <person name="Barr L."/>
            <person name="Martin S."/>
            <person name="Wray P."/>
            <person name="Ellington A."/>
            <person name="Matthews N."/>
            <person name="Ellwood M."/>
            <person name="Woodmansey R."/>
            <person name="Clark G."/>
            <person name="Cooper J."/>
            <person name="Tromans A."/>
            <person name="Grafham D."/>
            <person name="Skuce C."/>
            <person name="Pandian R."/>
            <person name="Andrews R."/>
            <person name="Harrison E."/>
            <person name="Kimberley A."/>
            <person name="Garnett J."/>
            <person name="Fosker N."/>
            <person name="Hall R."/>
            <person name="Garner P."/>
            <person name="Kelly D."/>
            <person name="Bird C."/>
            <person name="Palmer S."/>
            <person name="Gehring I."/>
            <person name="Berger A."/>
            <person name="Dooley C.M."/>
            <person name="Ersan-Urun Z."/>
            <person name="Eser C."/>
            <person name="Geiger H."/>
            <person name="Geisler M."/>
            <person name="Karotki L."/>
            <person name="Kirn A."/>
            <person name="Konantz J."/>
            <person name="Konantz M."/>
            <person name="Oberlander M."/>
            <person name="Rudolph-Geiger S."/>
            <person name="Teucke M."/>
            <person name="Lanz C."/>
            <person name="Raddatz G."/>
            <person name="Osoegawa K."/>
            <person name="Zhu B."/>
            <person name="Rapp A."/>
            <person name="Widaa S."/>
            <person name="Langford C."/>
            <person name="Yang F."/>
            <person name="Schuster S.C."/>
            <person name="Carter N.P."/>
            <person name="Harrow J."/>
            <person name="Ning Z."/>
            <person name="Herrero J."/>
            <person name="Searle S.M."/>
            <person name="Enright A."/>
            <person name="Geisler R."/>
            <person name="Plasterk R.H."/>
            <person name="Lee C."/>
            <person name="Westerfield M."/>
            <person name="de Jong P.J."/>
            <person name="Zon L.I."/>
            <person name="Postlethwait J.H."/>
            <person name="Nusslein-Volhard C."/>
            <person name="Hubbard T.J."/>
            <person name="Roest Crollius H."/>
            <person name="Rogers J."/>
            <person name="Stemple D.L."/>
        </authorList>
    </citation>
    <scope>NUCLEOTIDE SEQUENCE [LARGE SCALE GENOMIC DNA]</scope>
    <source>
        <strain>Tuebingen</strain>
    </source>
</reference>
<reference key="3">
    <citation type="submission" date="2005-10" db="EMBL/GenBank/DDBJ databases">
        <authorList>
            <consortium name="NIH - Zebrafish Gene Collection (ZGC) project"/>
        </authorList>
    </citation>
    <scope>NUCLEOTIDE SEQUENCE [LARGE SCALE MRNA] OF 1-251</scope>
    <source>
        <tissue>Heart</tissue>
    </source>
</reference>
<proteinExistence type="evidence at protein level"/>
<feature type="chain" id="PRO_0000191313" description="Solute carrier family 40 member 1">
    <location>
        <begin position="1"/>
        <end position="562"/>
    </location>
</feature>
<feature type="topological domain" description="Cytoplasmic" evidence="5">
    <location>
        <begin position="1"/>
        <end position="20"/>
    </location>
</feature>
<feature type="transmembrane region" description="Helical" evidence="2">
    <location>
        <begin position="21"/>
        <end position="50"/>
    </location>
</feature>
<feature type="topological domain" description="Extracellular" evidence="5">
    <location>
        <begin position="51"/>
        <end position="54"/>
    </location>
</feature>
<feature type="transmembrane region" description="Helical" evidence="2">
    <location>
        <begin position="55"/>
        <end position="81"/>
    </location>
</feature>
<feature type="topological domain" description="Cytoplasmic" evidence="5">
    <location>
        <begin position="82"/>
        <end position="84"/>
    </location>
</feature>
<feature type="transmembrane region" description="Helical" evidence="2">
    <location>
        <begin position="85"/>
        <end position="115"/>
    </location>
</feature>
<feature type="topological domain" description="Extracellular" evidence="5">
    <location>
        <begin position="116"/>
        <end position="123"/>
    </location>
</feature>
<feature type="transmembrane region" description="Helical" evidence="2">
    <location>
        <begin position="124"/>
        <end position="159"/>
    </location>
</feature>
<feature type="topological domain" description="Cytoplasmic" evidence="5">
    <location>
        <begin position="160"/>
        <end position="161"/>
    </location>
</feature>
<feature type="transmembrane region" description="Helical" evidence="2">
    <location>
        <begin position="162"/>
        <end position="192"/>
    </location>
</feature>
<feature type="topological domain" description="Extracellular" evidence="5">
    <location>
        <begin position="193"/>
        <end position="199"/>
    </location>
</feature>
<feature type="transmembrane region" description="Helical" evidence="2">
    <location>
        <begin position="200"/>
        <end position="226"/>
    </location>
</feature>
<feature type="topological domain" description="Cytoplasmic" evidence="5">
    <location>
        <begin position="227"/>
        <end position="300"/>
    </location>
</feature>
<feature type="transmembrane region" description="Helical" evidence="2">
    <location>
        <begin position="301"/>
        <end position="327"/>
    </location>
</feature>
<feature type="topological domain" description="Extracellular" evidence="5">
    <location>
        <begin position="328"/>
        <end position="332"/>
    </location>
</feature>
<feature type="transmembrane region" description="Helical" evidence="2">
    <location>
        <begin position="333"/>
        <end position="360"/>
    </location>
</feature>
<feature type="topological domain" description="Cytoplasmic" evidence="5">
    <location>
        <begin position="361"/>
        <end position="362"/>
    </location>
</feature>
<feature type="transmembrane region" description="Helical" evidence="2">
    <location>
        <begin position="363"/>
        <end position="385"/>
    </location>
</feature>
<feature type="topological domain" description="Extracellular" evidence="5">
    <location>
        <begin position="386"/>
        <end position="444"/>
    </location>
</feature>
<feature type="transmembrane region" description="Helical" evidence="2">
    <location>
        <begin position="445"/>
        <end position="474"/>
    </location>
</feature>
<feature type="topological domain" description="Cytoplasmic" evidence="5">
    <location>
        <begin position="475"/>
        <end position="479"/>
    </location>
</feature>
<feature type="transmembrane region" description="Helical" evidence="2">
    <location>
        <begin position="480"/>
        <end position="504"/>
    </location>
</feature>
<feature type="topological domain" description="Extracellular" evidence="5">
    <location>
        <begin position="505"/>
        <end position="507"/>
    </location>
</feature>
<feature type="transmembrane region" description="Helical" evidence="2">
    <location>
        <begin position="508"/>
        <end position="533"/>
    </location>
</feature>
<feature type="topological domain" description="Cytoplasmic" evidence="5">
    <location>
        <begin position="534"/>
        <end position="562"/>
    </location>
</feature>
<feature type="binding site" evidence="2">
    <location>
        <position position="36"/>
    </location>
    <ligand>
        <name>Fe cation</name>
        <dbReference type="ChEBI" id="CHEBI:24875"/>
        <label>1</label>
    </ligand>
</feature>
<feature type="binding site" evidence="2">
    <location>
        <position position="320"/>
    </location>
    <ligand>
        <name>Fe cation</name>
        <dbReference type="ChEBI" id="CHEBI:24875"/>
        <label>2</label>
    </ligand>
</feature>
<feature type="binding site" evidence="2">
    <location>
        <position position="498"/>
    </location>
    <ligand>
        <name>Fe cation</name>
        <dbReference type="ChEBI" id="CHEBI:24875"/>
        <label>2</label>
    </ligand>
</feature>
<feature type="mutagenesis site" description="In weissherbst tp85c mutant; homozygotes develop severe anemia within 48 h after fertilization and dies between 10 and 14 days of age." evidence="3">
    <original>L</original>
    <variation>F</variation>
    <location>
        <position position="167"/>
    </location>
</feature>
<feature type="sequence conflict" description="In Ref. 3; AAI07846." evidence="5" ref="3">
    <original>I</original>
    <variation>V</variation>
    <location>
        <position position="134"/>
    </location>
</feature>
<feature type="sequence conflict" description="In Ref. 1; AAF36695." evidence="5" ref="1">
    <original>T</original>
    <variation>P</variation>
    <location>
        <position position="272"/>
    </location>
</feature>
<feature type="sequence conflict" description="In Ref. 1; AAF36695." evidence="5" ref="1">
    <original>E</original>
    <variation>K</variation>
    <location>
        <position position="400"/>
    </location>
</feature>
<sequence length="562" mass="61765">MDSPASKKPRCERFREFFKSAKFLIYVGHALSTWGDRMWNFAVAVFLVELYGNSLLLTAVYGLVVAGSVLLLGAIIGDWVDKNPRLKVAQTSLVVQNSAVILCGALLMAVFQFKQQLSSMYDGWLLTTCYIMVISIANIANLASTAMSITIQRDWVVVVAGDDRSKLADMNATVRIIDQLTNILAPMLVGQIMAFGSHFIGCGFISGWNLFSMCLEYFLLWKVYQKTPALAFKAGQKDSDDQELKHLNIQKEIGNTESPVEASQLMTESSETKKDTGCCYQMAEPIRTFKDGWVAYYNQSIFFAGMSLAFLYMTVLGFDCITTGYAYTQGLNGSVLSLLMGASAVSGICGTVAFTWIRKKCGLIRTGFIAGVTQLSCLTLCVASVFAPGSPFDLSVSPFEEVLRHLFGDSGSLRESPTFIPTTEPPIQANVTVFEEAPPVESYMSVGLLFAGVIAARVGLWSFDLTVTQLIQENVIESERGVINGVQNSMNYLLDLLHFIMVILAPNPEAFGLLVIISVSFVAMGHMMYFRFAYKSLGSRLFLFCSPEQKPDPNIPSLPNSV</sequence>
<evidence type="ECO:0000250" key="1">
    <source>
        <dbReference type="UniProtKB" id="Q9JHI9"/>
    </source>
</evidence>
<evidence type="ECO:0000250" key="2">
    <source>
        <dbReference type="UniProtKB" id="Q9NP59"/>
    </source>
</evidence>
<evidence type="ECO:0000269" key="3">
    <source>
    </source>
</evidence>
<evidence type="ECO:0000303" key="4">
    <source>
    </source>
</evidence>
<evidence type="ECO:0000305" key="5"/>
<evidence type="ECO:0000305" key="6">
    <source>
    </source>
</evidence>
<organism>
    <name type="scientific">Danio rerio</name>
    <name type="common">Zebrafish</name>
    <name type="synonym">Brachydanio rerio</name>
    <dbReference type="NCBI Taxonomy" id="7955"/>
    <lineage>
        <taxon>Eukaryota</taxon>
        <taxon>Metazoa</taxon>
        <taxon>Chordata</taxon>
        <taxon>Craniata</taxon>
        <taxon>Vertebrata</taxon>
        <taxon>Euteleostomi</taxon>
        <taxon>Actinopterygii</taxon>
        <taxon>Neopterygii</taxon>
        <taxon>Teleostei</taxon>
        <taxon>Ostariophysi</taxon>
        <taxon>Cypriniformes</taxon>
        <taxon>Danionidae</taxon>
        <taxon>Danioninae</taxon>
        <taxon>Danio</taxon>
    </lineage>
</organism>
<protein>
    <recommendedName>
        <fullName>Solute carrier family 40 member 1</fullName>
    </recommendedName>
    <alternativeName>
        <fullName>Ferroportin-1</fullName>
    </alternativeName>
</protein>